<proteinExistence type="evidence at transcript level"/>
<dbReference type="EMBL" id="U04670">
    <property type="protein sequence ID" value="AAA67870.1"/>
    <property type="molecule type" value="mRNA"/>
</dbReference>
<dbReference type="GO" id="GO:0042600">
    <property type="term" value="C:egg chorion"/>
    <property type="evidence" value="ECO:0007669"/>
    <property type="project" value="InterPro"/>
</dbReference>
<dbReference type="GO" id="GO:0005213">
    <property type="term" value="F:structural constituent of egg chorion"/>
    <property type="evidence" value="ECO:0007669"/>
    <property type="project" value="InterPro"/>
</dbReference>
<dbReference type="GO" id="GO:0007304">
    <property type="term" value="P:chorion-containing eggshell formation"/>
    <property type="evidence" value="ECO:0007669"/>
    <property type="project" value="InterPro"/>
</dbReference>
<dbReference type="InterPro" id="IPR002635">
    <property type="entry name" value="Chorion"/>
</dbReference>
<dbReference type="Pfam" id="PF01723">
    <property type="entry name" value="Chorion_1"/>
    <property type="match status" value="1"/>
</dbReference>
<feature type="signal peptide" evidence="1">
    <location>
        <begin position="1"/>
        <end position="21"/>
    </location>
</feature>
<feature type="chain" id="PRO_0000044629" description="Chorion class A protein Ld2/Ld41">
    <location>
        <begin position="22"/>
        <end position="140"/>
    </location>
</feature>
<reference key="1">
    <citation type="journal article" date="1994" name="J. Mol. Evol.">
        <title>Evolution of chorion gene families in lepidoptera: characterization of 15 cDNAs from the gypsy moth.</title>
        <authorList>
            <person name="Leclerc R.F."/>
            <person name="Regier J.C."/>
        </authorList>
    </citation>
    <scope>NUCLEOTIDE SEQUENCE [MRNA]</scope>
    <source>
        <tissue>Choriogenic follicle</tissue>
    </source>
</reference>
<evidence type="ECO:0000255" key="1"/>
<evidence type="ECO:0000305" key="2"/>
<organism>
    <name type="scientific">Lymantria dispar</name>
    <name type="common">Gypsy moth</name>
    <name type="synonym">Porthetria dispar</name>
    <dbReference type="NCBI Taxonomy" id="13123"/>
    <lineage>
        <taxon>Eukaryota</taxon>
        <taxon>Metazoa</taxon>
        <taxon>Ecdysozoa</taxon>
        <taxon>Arthropoda</taxon>
        <taxon>Hexapoda</taxon>
        <taxon>Insecta</taxon>
        <taxon>Pterygota</taxon>
        <taxon>Neoptera</taxon>
        <taxon>Endopterygota</taxon>
        <taxon>Lepidoptera</taxon>
        <taxon>Glossata</taxon>
        <taxon>Ditrysia</taxon>
        <taxon>Noctuoidea</taxon>
        <taxon>Erebidae</taxon>
        <taxon>Lymantriinae</taxon>
        <taxon>Lymantria</taxon>
    </lineage>
</organism>
<comment type="function">
    <text>This protein is one of many from the eggshell of the gypsy moth.</text>
</comment>
<comment type="similarity">
    <text evidence="2">Belongs to the chorion protein family.</text>
</comment>
<name>CHA2B_LYMDI</name>
<protein>
    <recommendedName>
        <fullName>Chorion class A protein Ld2/Ld41</fullName>
    </recommendedName>
</protein>
<keyword id="KW-0677">Repeat</keyword>
<keyword id="KW-0732">Signal</keyword>
<sequence length="140" mass="13821">MNSFALLLVCIQACLVQSVFSQCTSRAAVAADRGIIGGYGLGAPYGLGCGYGLEAPYGWAGYADYGYGLDAYGGIGEGNVAVAGELPVAGTTAVAGQVPIMGAVKFGGDVCAAGSVSIAGKCDCGCGEVYGYGLGAPYLY</sequence>
<accession>P0C0U3</accession>
<accession>P43512</accession>